<organism>
    <name type="scientific">Salmonella heidelberg (strain SL476)</name>
    <dbReference type="NCBI Taxonomy" id="454169"/>
    <lineage>
        <taxon>Bacteria</taxon>
        <taxon>Pseudomonadati</taxon>
        <taxon>Pseudomonadota</taxon>
        <taxon>Gammaproteobacteria</taxon>
        <taxon>Enterobacterales</taxon>
        <taxon>Enterobacteriaceae</taxon>
        <taxon>Salmonella</taxon>
    </lineage>
</organism>
<comment type="catalytic activity">
    <reaction evidence="1">
        <text>(2R)-3-phosphoglycerate + ATP = (2R)-3-phospho-glyceroyl phosphate + ADP</text>
        <dbReference type="Rhea" id="RHEA:14801"/>
        <dbReference type="ChEBI" id="CHEBI:30616"/>
        <dbReference type="ChEBI" id="CHEBI:57604"/>
        <dbReference type="ChEBI" id="CHEBI:58272"/>
        <dbReference type="ChEBI" id="CHEBI:456216"/>
        <dbReference type="EC" id="2.7.2.3"/>
    </reaction>
</comment>
<comment type="pathway">
    <text evidence="1">Carbohydrate degradation; glycolysis; pyruvate from D-glyceraldehyde 3-phosphate: step 2/5.</text>
</comment>
<comment type="subunit">
    <text evidence="1">Monomer.</text>
</comment>
<comment type="subcellular location">
    <subcellularLocation>
        <location evidence="1">Cytoplasm</location>
    </subcellularLocation>
</comment>
<comment type="similarity">
    <text evidence="1">Belongs to the phosphoglycerate kinase family.</text>
</comment>
<accession>B4THF3</accession>
<name>PGK_SALHS</name>
<feature type="chain" id="PRO_1000096373" description="Phosphoglycerate kinase">
    <location>
        <begin position="1"/>
        <end position="387"/>
    </location>
</feature>
<feature type="binding site" evidence="1">
    <location>
        <begin position="21"/>
        <end position="23"/>
    </location>
    <ligand>
        <name>substrate</name>
    </ligand>
</feature>
<feature type="binding site" evidence="1">
    <location>
        <position position="36"/>
    </location>
    <ligand>
        <name>substrate</name>
    </ligand>
</feature>
<feature type="binding site" evidence="1">
    <location>
        <begin position="59"/>
        <end position="62"/>
    </location>
    <ligand>
        <name>substrate</name>
    </ligand>
</feature>
<feature type="binding site" evidence="1">
    <location>
        <position position="113"/>
    </location>
    <ligand>
        <name>substrate</name>
    </ligand>
</feature>
<feature type="binding site" evidence="1">
    <location>
        <position position="146"/>
    </location>
    <ligand>
        <name>substrate</name>
    </ligand>
</feature>
<feature type="binding site" evidence="1">
    <location>
        <position position="197"/>
    </location>
    <ligand>
        <name>ATP</name>
        <dbReference type="ChEBI" id="CHEBI:30616"/>
    </ligand>
</feature>
<feature type="binding site" evidence="1">
    <location>
        <position position="314"/>
    </location>
    <ligand>
        <name>ATP</name>
        <dbReference type="ChEBI" id="CHEBI:30616"/>
    </ligand>
</feature>
<feature type="binding site" evidence="1">
    <location>
        <begin position="340"/>
        <end position="343"/>
    </location>
    <ligand>
        <name>ATP</name>
        <dbReference type="ChEBI" id="CHEBI:30616"/>
    </ligand>
</feature>
<protein>
    <recommendedName>
        <fullName evidence="1">Phosphoglycerate kinase</fullName>
        <ecNumber evidence="1">2.7.2.3</ecNumber>
    </recommendedName>
</protein>
<dbReference type="EC" id="2.7.2.3" evidence="1"/>
<dbReference type="EMBL" id="CP001120">
    <property type="protein sequence ID" value="ACF70438.1"/>
    <property type="molecule type" value="Genomic_DNA"/>
</dbReference>
<dbReference type="RefSeq" id="WP_000111274.1">
    <property type="nucleotide sequence ID" value="NC_011083.1"/>
</dbReference>
<dbReference type="SMR" id="B4THF3"/>
<dbReference type="KEGG" id="seh:SeHA_C3306"/>
<dbReference type="HOGENOM" id="CLU_025427_0_2_6"/>
<dbReference type="UniPathway" id="UPA00109">
    <property type="reaction ID" value="UER00185"/>
</dbReference>
<dbReference type="Proteomes" id="UP000001866">
    <property type="component" value="Chromosome"/>
</dbReference>
<dbReference type="GO" id="GO:0005829">
    <property type="term" value="C:cytosol"/>
    <property type="evidence" value="ECO:0007669"/>
    <property type="project" value="TreeGrafter"/>
</dbReference>
<dbReference type="GO" id="GO:0043531">
    <property type="term" value="F:ADP binding"/>
    <property type="evidence" value="ECO:0007669"/>
    <property type="project" value="TreeGrafter"/>
</dbReference>
<dbReference type="GO" id="GO:0005524">
    <property type="term" value="F:ATP binding"/>
    <property type="evidence" value="ECO:0007669"/>
    <property type="project" value="UniProtKB-KW"/>
</dbReference>
<dbReference type="GO" id="GO:0004618">
    <property type="term" value="F:phosphoglycerate kinase activity"/>
    <property type="evidence" value="ECO:0007669"/>
    <property type="project" value="UniProtKB-UniRule"/>
</dbReference>
<dbReference type="GO" id="GO:0006094">
    <property type="term" value="P:gluconeogenesis"/>
    <property type="evidence" value="ECO:0007669"/>
    <property type="project" value="TreeGrafter"/>
</dbReference>
<dbReference type="GO" id="GO:0006096">
    <property type="term" value="P:glycolytic process"/>
    <property type="evidence" value="ECO:0007669"/>
    <property type="project" value="UniProtKB-UniRule"/>
</dbReference>
<dbReference type="FunFam" id="3.40.50.1260:FF:000001">
    <property type="entry name" value="Phosphoglycerate kinase"/>
    <property type="match status" value="1"/>
</dbReference>
<dbReference type="FunFam" id="3.40.50.1260:FF:000002">
    <property type="entry name" value="Phosphoglycerate kinase"/>
    <property type="match status" value="1"/>
</dbReference>
<dbReference type="Gene3D" id="3.40.50.1260">
    <property type="entry name" value="Phosphoglycerate kinase, N-terminal domain"/>
    <property type="match status" value="2"/>
</dbReference>
<dbReference type="HAMAP" id="MF_00145">
    <property type="entry name" value="Phosphoglyc_kinase"/>
    <property type="match status" value="1"/>
</dbReference>
<dbReference type="InterPro" id="IPR001576">
    <property type="entry name" value="Phosphoglycerate_kinase"/>
</dbReference>
<dbReference type="InterPro" id="IPR015911">
    <property type="entry name" value="Phosphoglycerate_kinase_CS"/>
</dbReference>
<dbReference type="InterPro" id="IPR015824">
    <property type="entry name" value="Phosphoglycerate_kinase_N"/>
</dbReference>
<dbReference type="InterPro" id="IPR036043">
    <property type="entry name" value="Phosphoglycerate_kinase_sf"/>
</dbReference>
<dbReference type="PANTHER" id="PTHR11406">
    <property type="entry name" value="PHOSPHOGLYCERATE KINASE"/>
    <property type="match status" value="1"/>
</dbReference>
<dbReference type="PANTHER" id="PTHR11406:SF23">
    <property type="entry name" value="PHOSPHOGLYCERATE KINASE 1, CHLOROPLASTIC-RELATED"/>
    <property type="match status" value="1"/>
</dbReference>
<dbReference type="Pfam" id="PF00162">
    <property type="entry name" value="PGK"/>
    <property type="match status" value="1"/>
</dbReference>
<dbReference type="PIRSF" id="PIRSF000724">
    <property type="entry name" value="Pgk"/>
    <property type="match status" value="1"/>
</dbReference>
<dbReference type="PRINTS" id="PR00477">
    <property type="entry name" value="PHGLYCKINASE"/>
</dbReference>
<dbReference type="SUPFAM" id="SSF53748">
    <property type="entry name" value="Phosphoglycerate kinase"/>
    <property type="match status" value="1"/>
</dbReference>
<dbReference type="PROSITE" id="PS00111">
    <property type="entry name" value="PGLYCERATE_KINASE"/>
    <property type="match status" value="1"/>
</dbReference>
<gene>
    <name evidence="1" type="primary">pgk</name>
    <name type="ordered locus">SeHA_C3306</name>
</gene>
<keyword id="KW-0067">ATP-binding</keyword>
<keyword id="KW-0963">Cytoplasm</keyword>
<keyword id="KW-0324">Glycolysis</keyword>
<keyword id="KW-0418">Kinase</keyword>
<keyword id="KW-0547">Nucleotide-binding</keyword>
<keyword id="KW-0808">Transferase</keyword>
<sequence length="387" mass="41132">MSVIKMTDLDLAGKRVFIRADLNVPVKEGKVTSDARIRASLPTIELALKQGAKVMVTSHLGRPTEGEYNEEFSLLPVVNYLKDKLSNPVRLVKDYLDGVDVAEGELVVLENVRFNKGEKKDDEALSKKYAALCDVFVMDAFGTAHRAQASTHGIGKFADVACAGPLLAAELDALGKALKEPARPMVAIVGGSKVSTKLTVLDSLSKIADQLIVGGGIANTFVAAQGHSVGKSLYEADLVDEAKRLLTTCDIPVPTDVRVATEFSETAPATLKSVNDVKEDEQILDIGDASAQQLAEILKNAKTILWNGPVGVFEFPNFRKGTEIVANAIADSEAFSIAGGGDTLAAIDLFGIADKISYISTGGGAFLEFVEGKVLPAVAMLEERAKK</sequence>
<reference key="1">
    <citation type="journal article" date="2011" name="J. Bacteriol.">
        <title>Comparative genomics of 28 Salmonella enterica isolates: evidence for CRISPR-mediated adaptive sublineage evolution.</title>
        <authorList>
            <person name="Fricke W.F."/>
            <person name="Mammel M.K."/>
            <person name="McDermott P.F."/>
            <person name="Tartera C."/>
            <person name="White D.G."/>
            <person name="Leclerc J.E."/>
            <person name="Ravel J."/>
            <person name="Cebula T.A."/>
        </authorList>
    </citation>
    <scope>NUCLEOTIDE SEQUENCE [LARGE SCALE GENOMIC DNA]</scope>
    <source>
        <strain>SL476</strain>
    </source>
</reference>
<proteinExistence type="inferred from homology"/>
<evidence type="ECO:0000255" key="1">
    <source>
        <dbReference type="HAMAP-Rule" id="MF_00145"/>
    </source>
</evidence>